<proteinExistence type="inferred from homology"/>
<gene>
    <name evidence="1" type="primary">thyA</name>
    <name type="ordered locus">Shew185_1232</name>
</gene>
<evidence type="ECO:0000255" key="1">
    <source>
        <dbReference type="HAMAP-Rule" id="MF_00008"/>
    </source>
</evidence>
<accession>A6WKP4</accession>
<dbReference type="EC" id="2.1.1.45" evidence="1"/>
<dbReference type="EMBL" id="CP000753">
    <property type="protein sequence ID" value="ABS07383.1"/>
    <property type="molecule type" value="Genomic_DNA"/>
</dbReference>
<dbReference type="RefSeq" id="WP_006085062.1">
    <property type="nucleotide sequence ID" value="NC_009665.1"/>
</dbReference>
<dbReference type="SMR" id="A6WKP4"/>
<dbReference type="GeneID" id="11771535"/>
<dbReference type="KEGG" id="sbm:Shew185_1232"/>
<dbReference type="HOGENOM" id="CLU_021669_0_0_6"/>
<dbReference type="UniPathway" id="UPA00575"/>
<dbReference type="GO" id="GO:0005829">
    <property type="term" value="C:cytosol"/>
    <property type="evidence" value="ECO:0007669"/>
    <property type="project" value="TreeGrafter"/>
</dbReference>
<dbReference type="GO" id="GO:0004799">
    <property type="term" value="F:thymidylate synthase activity"/>
    <property type="evidence" value="ECO:0007669"/>
    <property type="project" value="UniProtKB-UniRule"/>
</dbReference>
<dbReference type="GO" id="GO:0006231">
    <property type="term" value="P:dTMP biosynthetic process"/>
    <property type="evidence" value="ECO:0007669"/>
    <property type="project" value="UniProtKB-UniRule"/>
</dbReference>
<dbReference type="GO" id="GO:0006235">
    <property type="term" value="P:dTTP biosynthetic process"/>
    <property type="evidence" value="ECO:0007669"/>
    <property type="project" value="UniProtKB-UniRule"/>
</dbReference>
<dbReference type="GO" id="GO:0032259">
    <property type="term" value="P:methylation"/>
    <property type="evidence" value="ECO:0007669"/>
    <property type="project" value="UniProtKB-KW"/>
</dbReference>
<dbReference type="CDD" id="cd00351">
    <property type="entry name" value="TS_Pyrimidine_HMase"/>
    <property type="match status" value="1"/>
</dbReference>
<dbReference type="FunFam" id="3.30.572.10:FF:000001">
    <property type="entry name" value="Thymidylate synthase"/>
    <property type="match status" value="1"/>
</dbReference>
<dbReference type="Gene3D" id="3.30.572.10">
    <property type="entry name" value="Thymidylate synthase/dCMP hydroxymethylase domain"/>
    <property type="match status" value="1"/>
</dbReference>
<dbReference type="HAMAP" id="MF_00008">
    <property type="entry name" value="Thymidy_synth_bact"/>
    <property type="match status" value="1"/>
</dbReference>
<dbReference type="InterPro" id="IPR045097">
    <property type="entry name" value="Thymidate_synth/dCMP_Mease"/>
</dbReference>
<dbReference type="InterPro" id="IPR023451">
    <property type="entry name" value="Thymidate_synth/dCMP_Mease_dom"/>
</dbReference>
<dbReference type="InterPro" id="IPR036926">
    <property type="entry name" value="Thymidate_synth/dCMP_Mease_sf"/>
</dbReference>
<dbReference type="InterPro" id="IPR000398">
    <property type="entry name" value="Thymidylate_synthase"/>
</dbReference>
<dbReference type="InterPro" id="IPR020940">
    <property type="entry name" value="Thymidylate_synthase_AS"/>
</dbReference>
<dbReference type="NCBIfam" id="NF002497">
    <property type="entry name" value="PRK01827.1-3"/>
    <property type="match status" value="1"/>
</dbReference>
<dbReference type="NCBIfam" id="NF002499">
    <property type="entry name" value="PRK01827.1-5"/>
    <property type="match status" value="1"/>
</dbReference>
<dbReference type="NCBIfam" id="TIGR03284">
    <property type="entry name" value="thym_sym"/>
    <property type="match status" value="2"/>
</dbReference>
<dbReference type="PANTHER" id="PTHR11548:SF9">
    <property type="entry name" value="THYMIDYLATE SYNTHASE"/>
    <property type="match status" value="1"/>
</dbReference>
<dbReference type="PANTHER" id="PTHR11548">
    <property type="entry name" value="THYMIDYLATE SYNTHASE 1"/>
    <property type="match status" value="1"/>
</dbReference>
<dbReference type="Pfam" id="PF00303">
    <property type="entry name" value="Thymidylat_synt"/>
    <property type="match status" value="1"/>
</dbReference>
<dbReference type="PRINTS" id="PR00108">
    <property type="entry name" value="THYMDSNTHASE"/>
</dbReference>
<dbReference type="SUPFAM" id="SSF55831">
    <property type="entry name" value="Thymidylate synthase/dCMP hydroxymethylase"/>
    <property type="match status" value="1"/>
</dbReference>
<dbReference type="PROSITE" id="PS00091">
    <property type="entry name" value="THYMIDYLATE_SYNTHASE"/>
    <property type="match status" value="1"/>
</dbReference>
<comment type="function">
    <text evidence="1">Catalyzes the reductive methylation of 2'-deoxyuridine-5'-monophosphate (dUMP) to 2'-deoxythymidine-5'-monophosphate (dTMP) while utilizing 5,10-methylenetetrahydrofolate (mTHF) as the methyl donor and reductant in the reaction, yielding dihydrofolate (DHF) as a by-product. This enzymatic reaction provides an intracellular de novo source of dTMP, an essential precursor for DNA biosynthesis.</text>
</comment>
<comment type="catalytic activity">
    <reaction evidence="1">
        <text>dUMP + (6R)-5,10-methylene-5,6,7,8-tetrahydrofolate = 7,8-dihydrofolate + dTMP</text>
        <dbReference type="Rhea" id="RHEA:12104"/>
        <dbReference type="ChEBI" id="CHEBI:15636"/>
        <dbReference type="ChEBI" id="CHEBI:57451"/>
        <dbReference type="ChEBI" id="CHEBI:63528"/>
        <dbReference type="ChEBI" id="CHEBI:246422"/>
        <dbReference type="EC" id="2.1.1.45"/>
    </reaction>
</comment>
<comment type="pathway">
    <text evidence="1">Pyrimidine metabolism; dTTP biosynthesis.</text>
</comment>
<comment type="subunit">
    <text evidence="1">Homodimer.</text>
</comment>
<comment type="subcellular location">
    <subcellularLocation>
        <location evidence="1">Cytoplasm</location>
    </subcellularLocation>
</comment>
<comment type="similarity">
    <text evidence="1">Belongs to the thymidylate synthase family. Bacterial-type ThyA subfamily.</text>
</comment>
<keyword id="KW-0963">Cytoplasm</keyword>
<keyword id="KW-0489">Methyltransferase</keyword>
<keyword id="KW-0545">Nucleotide biosynthesis</keyword>
<keyword id="KW-0808">Transferase</keyword>
<reference key="1">
    <citation type="submission" date="2007-07" db="EMBL/GenBank/DDBJ databases">
        <title>Complete sequence of chromosome of Shewanella baltica OS185.</title>
        <authorList>
            <consortium name="US DOE Joint Genome Institute"/>
            <person name="Copeland A."/>
            <person name="Lucas S."/>
            <person name="Lapidus A."/>
            <person name="Barry K."/>
            <person name="Glavina del Rio T."/>
            <person name="Dalin E."/>
            <person name="Tice H."/>
            <person name="Pitluck S."/>
            <person name="Sims D."/>
            <person name="Brettin T."/>
            <person name="Bruce D."/>
            <person name="Detter J.C."/>
            <person name="Han C."/>
            <person name="Schmutz J."/>
            <person name="Larimer F."/>
            <person name="Land M."/>
            <person name="Hauser L."/>
            <person name="Kyrpides N."/>
            <person name="Mikhailova N."/>
            <person name="Brettar I."/>
            <person name="Rodrigues J."/>
            <person name="Konstantinidis K."/>
            <person name="Tiedje J."/>
            <person name="Richardson P."/>
        </authorList>
    </citation>
    <scope>NUCLEOTIDE SEQUENCE [LARGE SCALE GENOMIC DNA]</scope>
    <source>
        <strain>OS185</strain>
    </source>
</reference>
<feature type="chain" id="PRO_1000000669" description="Thymidylate synthase">
    <location>
        <begin position="1"/>
        <end position="264"/>
    </location>
</feature>
<feature type="active site" description="Nucleophile" evidence="1">
    <location>
        <position position="146"/>
    </location>
</feature>
<feature type="binding site" description="in other chain" evidence="1">
    <location>
        <position position="21"/>
    </location>
    <ligand>
        <name>dUMP</name>
        <dbReference type="ChEBI" id="CHEBI:246422"/>
        <note>ligand shared between dimeric partners</note>
    </ligand>
</feature>
<feature type="binding site" evidence="1">
    <location>
        <position position="51"/>
    </location>
    <ligand>
        <name>(6R)-5,10-methylene-5,6,7,8-tetrahydrofolate</name>
        <dbReference type="ChEBI" id="CHEBI:15636"/>
    </ligand>
</feature>
<feature type="binding site" evidence="1">
    <location>
        <begin position="126"/>
        <end position="127"/>
    </location>
    <ligand>
        <name>dUMP</name>
        <dbReference type="ChEBI" id="CHEBI:246422"/>
        <note>ligand shared between dimeric partners</note>
    </ligand>
</feature>
<feature type="binding site" description="in other chain" evidence="1">
    <location>
        <begin position="166"/>
        <end position="169"/>
    </location>
    <ligand>
        <name>dUMP</name>
        <dbReference type="ChEBI" id="CHEBI:246422"/>
        <note>ligand shared between dimeric partners</note>
    </ligand>
</feature>
<feature type="binding site" evidence="1">
    <location>
        <position position="169"/>
    </location>
    <ligand>
        <name>(6R)-5,10-methylene-5,6,7,8-tetrahydrofolate</name>
        <dbReference type="ChEBI" id="CHEBI:15636"/>
    </ligand>
</feature>
<feature type="binding site" description="in other chain" evidence="1">
    <location>
        <position position="177"/>
    </location>
    <ligand>
        <name>dUMP</name>
        <dbReference type="ChEBI" id="CHEBI:246422"/>
        <note>ligand shared between dimeric partners</note>
    </ligand>
</feature>
<feature type="binding site" description="in other chain" evidence="1">
    <location>
        <begin position="207"/>
        <end position="209"/>
    </location>
    <ligand>
        <name>dUMP</name>
        <dbReference type="ChEBI" id="CHEBI:246422"/>
        <note>ligand shared between dimeric partners</note>
    </ligand>
</feature>
<feature type="binding site" evidence="1">
    <location>
        <position position="263"/>
    </location>
    <ligand>
        <name>(6R)-5,10-methylene-5,6,7,8-tetrahydrofolate</name>
        <dbReference type="ChEBI" id="CHEBI:15636"/>
    </ligand>
</feature>
<organism>
    <name type="scientific">Shewanella baltica (strain OS185)</name>
    <dbReference type="NCBI Taxonomy" id="402882"/>
    <lineage>
        <taxon>Bacteria</taxon>
        <taxon>Pseudomonadati</taxon>
        <taxon>Pseudomonadota</taxon>
        <taxon>Gammaproteobacteria</taxon>
        <taxon>Alteromonadales</taxon>
        <taxon>Shewanellaceae</taxon>
        <taxon>Shewanella</taxon>
    </lineage>
</organism>
<name>TYSY_SHEB8</name>
<sequence length="264" mass="30066">MKQYLDLMKHILAEGVDKSDRTGTGTRSVFGYQMRFDLSKGFPLVSTKKCHMRSIIHELLWFLKGETNVAYLRENKVSIWDEWADDNGDLGPVYGAQWRSWPTQSGDAIDQISQVIAQIKSQPDSRRLIVSAWNVGELDKMALAPCHAFFQFYVADGKLSCQLYQRSCDVFLGLPFNIASYALLTMMVAQQCDLALGDFVWTGGDTHLYSNHMEQTALQLSREPMPLPTMTILRRPESIFDYQFDDFELTNYAPHPHIKAPVAV</sequence>
<protein>
    <recommendedName>
        <fullName evidence="1">Thymidylate synthase</fullName>
        <shortName evidence="1">TS</shortName>
        <shortName evidence="1">TSase</shortName>
        <ecNumber evidence="1">2.1.1.45</ecNumber>
    </recommendedName>
</protein>